<comment type="subcellular location">
    <subcellularLocation>
        <location evidence="1">Cytoplasm</location>
    </subcellularLocation>
</comment>
<comment type="similarity">
    <text evidence="1">Belongs to the UPF0294 family.</text>
</comment>
<protein>
    <recommendedName>
        <fullName evidence="1">UPF0294 protein VV2535</fullName>
    </recommendedName>
</protein>
<feature type="chain" id="PRO_0000074647" description="UPF0294 protein VV2535">
    <location>
        <begin position="1"/>
        <end position="284"/>
    </location>
</feature>
<name>Y2535_VIBVY</name>
<proteinExistence type="inferred from homology"/>
<gene>
    <name type="ordered locus">VV2535</name>
</gene>
<organism>
    <name type="scientific">Vibrio vulnificus (strain YJ016)</name>
    <dbReference type="NCBI Taxonomy" id="196600"/>
    <lineage>
        <taxon>Bacteria</taxon>
        <taxon>Pseudomonadati</taxon>
        <taxon>Pseudomonadota</taxon>
        <taxon>Gammaproteobacteria</taxon>
        <taxon>Vibrionales</taxon>
        <taxon>Vibrionaceae</taxon>
        <taxon>Vibrio</taxon>
    </lineage>
</organism>
<sequence>MRKRIWVGLPLALVFGGIFAFHTVFHIPEQPEMTTISDGSFNQQLHCYESSTRASIDQEGRLNLLVWNIYKQNRANWQSVLTQMSAGAQLILLQEASLEDGLKRWIASGGWSGEQVNAFKAFDKAAGVLTLGWRKPRLACGYTQLEPWIRLPKSGLYSEYPLSDGQMLIVVNLHAVNFTWGVQEYQQQVNDLIAALKEHPGPAIVAGDFNTWSEKRLQAVTERLENAGLIEVVFSPDQRTRFITGLPLDHVFYKGLEVQKAEAPQTDASDHNPLLVSFTLPTDK</sequence>
<keyword id="KW-0963">Cytoplasm</keyword>
<accession>Q7MII1</accession>
<reference key="1">
    <citation type="journal article" date="2003" name="Genome Res.">
        <title>Comparative genome analysis of Vibrio vulnificus, a marine pathogen.</title>
        <authorList>
            <person name="Chen C.-Y."/>
            <person name="Wu K.-M."/>
            <person name="Chang Y.-C."/>
            <person name="Chang C.-H."/>
            <person name="Tsai H.-C."/>
            <person name="Liao T.-L."/>
            <person name="Liu Y.-M."/>
            <person name="Chen H.-J."/>
            <person name="Shen A.B.-T."/>
            <person name="Li J.-C."/>
            <person name="Su T.-L."/>
            <person name="Shao C.-P."/>
            <person name="Lee C.-T."/>
            <person name="Hor L.-I."/>
            <person name="Tsai S.-F."/>
        </authorList>
    </citation>
    <scope>NUCLEOTIDE SEQUENCE [LARGE SCALE GENOMIC DNA]</scope>
    <source>
        <strain>YJ016</strain>
    </source>
</reference>
<dbReference type="EMBL" id="BA000037">
    <property type="protein sequence ID" value="BAC95299.1"/>
    <property type="molecule type" value="Genomic_DNA"/>
</dbReference>
<dbReference type="RefSeq" id="WP_011150953.1">
    <property type="nucleotide sequence ID" value="NC_005139.1"/>
</dbReference>
<dbReference type="SMR" id="Q7MII1"/>
<dbReference type="STRING" id="672.VV93_v1c22560"/>
<dbReference type="KEGG" id="vvy:VV2535"/>
<dbReference type="PATRIC" id="fig|196600.6.peg.2541"/>
<dbReference type="eggNOG" id="COG3021">
    <property type="taxonomic scope" value="Bacteria"/>
</dbReference>
<dbReference type="HOGENOM" id="CLU_083563_0_0_6"/>
<dbReference type="Proteomes" id="UP000002675">
    <property type="component" value="Chromosome I"/>
</dbReference>
<dbReference type="GO" id="GO:0005737">
    <property type="term" value="C:cytoplasm"/>
    <property type="evidence" value="ECO:0007669"/>
    <property type="project" value="UniProtKB-SubCell"/>
</dbReference>
<dbReference type="GO" id="GO:0003824">
    <property type="term" value="F:catalytic activity"/>
    <property type="evidence" value="ECO:0007669"/>
    <property type="project" value="InterPro"/>
</dbReference>
<dbReference type="Gene3D" id="3.60.10.10">
    <property type="entry name" value="Endonuclease/exonuclease/phosphatase"/>
    <property type="match status" value="1"/>
</dbReference>
<dbReference type="HAMAP" id="MF_01119">
    <property type="entry name" value="UPF0294"/>
    <property type="match status" value="1"/>
</dbReference>
<dbReference type="InterPro" id="IPR036691">
    <property type="entry name" value="Endo/exonu/phosph_ase_sf"/>
</dbReference>
<dbReference type="InterPro" id="IPR005135">
    <property type="entry name" value="Endo/exonuclease/phosphatase"/>
</dbReference>
<dbReference type="InterPro" id="IPR022958">
    <property type="entry name" value="UPF0294"/>
</dbReference>
<dbReference type="NCBIfam" id="NF003840">
    <property type="entry name" value="PRK05421.1-2"/>
    <property type="match status" value="1"/>
</dbReference>
<dbReference type="NCBIfam" id="NF003841">
    <property type="entry name" value="PRK05421.1-3"/>
    <property type="match status" value="1"/>
</dbReference>
<dbReference type="NCBIfam" id="NF003842">
    <property type="entry name" value="PRK05421.1-4"/>
    <property type="match status" value="1"/>
</dbReference>
<dbReference type="Pfam" id="PF03372">
    <property type="entry name" value="Exo_endo_phos"/>
    <property type="match status" value="1"/>
</dbReference>
<dbReference type="SUPFAM" id="SSF56219">
    <property type="entry name" value="DNase I-like"/>
    <property type="match status" value="1"/>
</dbReference>
<evidence type="ECO:0000255" key="1">
    <source>
        <dbReference type="HAMAP-Rule" id="MF_01119"/>
    </source>
</evidence>